<reference key="1">
    <citation type="journal article" date="2003" name="Appl. Microbiol. Biotechnol.">
        <title>The Corynebacterium glutamicum genome: features and impacts on biotechnological processes.</title>
        <authorList>
            <person name="Ikeda M."/>
            <person name="Nakagawa S."/>
        </authorList>
    </citation>
    <scope>NUCLEOTIDE SEQUENCE [LARGE SCALE GENOMIC DNA]</scope>
    <source>
        <strain>ATCC 13032 / DSM 20300 / JCM 1318 / BCRC 11384 / CCUG 27702 / LMG 3730 / NBRC 12168 / NCIMB 10025 / NRRL B-2784 / 534</strain>
    </source>
</reference>
<reference key="2">
    <citation type="journal article" date="2003" name="J. Biotechnol.">
        <title>The complete Corynebacterium glutamicum ATCC 13032 genome sequence and its impact on the production of L-aspartate-derived amino acids and vitamins.</title>
        <authorList>
            <person name="Kalinowski J."/>
            <person name="Bathe B."/>
            <person name="Bartels D."/>
            <person name="Bischoff N."/>
            <person name="Bott M."/>
            <person name="Burkovski A."/>
            <person name="Dusch N."/>
            <person name="Eggeling L."/>
            <person name="Eikmanns B.J."/>
            <person name="Gaigalat L."/>
            <person name="Goesmann A."/>
            <person name="Hartmann M."/>
            <person name="Huthmacher K."/>
            <person name="Kraemer R."/>
            <person name="Linke B."/>
            <person name="McHardy A.C."/>
            <person name="Meyer F."/>
            <person name="Moeckel B."/>
            <person name="Pfefferle W."/>
            <person name="Puehler A."/>
            <person name="Rey D.A."/>
            <person name="Rueckert C."/>
            <person name="Rupp O."/>
            <person name="Sahm H."/>
            <person name="Wendisch V.F."/>
            <person name="Wiegraebe I."/>
            <person name="Tauch A."/>
        </authorList>
    </citation>
    <scope>NUCLEOTIDE SEQUENCE [LARGE SCALE GENOMIC DNA]</scope>
    <source>
        <strain>ATCC 13032 / DSM 20300 / JCM 1318 / BCRC 11384 / CCUG 27702 / LMG 3730 / NBRC 12168 / NCIMB 10025 / NRRL B-2784 / 534</strain>
    </source>
</reference>
<dbReference type="EC" id="3.6.1.7"/>
<dbReference type="EMBL" id="BA000036">
    <property type="protein sequence ID" value="BAB99459.1"/>
    <property type="molecule type" value="Genomic_DNA"/>
</dbReference>
<dbReference type="EMBL" id="BX927154">
    <property type="protein sequence ID" value="CAF20403.1"/>
    <property type="molecule type" value="Genomic_DNA"/>
</dbReference>
<dbReference type="RefSeq" id="NP_694659.1">
    <property type="nucleotide sequence ID" value="NC_003450.3"/>
</dbReference>
<dbReference type="RefSeq" id="WP_003856367.1">
    <property type="nucleotide sequence ID" value="NC_006958.1"/>
</dbReference>
<dbReference type="SMR" id="Q8NNW4"/>
<dbReference type="STRING" id="196627.cg2266"/>
<dbReference type="KEGG" id="cgb:cg2266"/>
<dbReference type="KEGG" id="cgl:Cgl2066"/>
<dbReference type="PATRIC" id="fig|196627.13.peg.2003"/>
<dbReference type="eggNOG" id="COG1254">
    <property type="taxonomic scope" value="Bacteria"/>
</dbReference>
<dbReference type="HOGENOM" id="CLU_141932_3_0_11"/>
<dbReference type="OrthoDB" id="3182027at2"/>
<dbReference type="BioCyc" id="CORYNE:G18NG-11658-MONOMER"/>
<dbReference type="Proteomes" id="UP000000582">
    <property type="component" value="Chromosome"/>
</dbReference>
<dbReference type="Proteomes" id="UP000001009">
    <property type="component" value="Chromosome"/>
</dbReference>
<dbReference type="GO" id="GO:0003998">
    <property type="term" value="F:acylphosphatase activity"/>
    <property type="evidence" value="ECO:0007669"/>
    <property type="project" value="UniProtKB-EC"/>
</dbReference>
<dbReference type="Gene3D" id="3.30.70.100">
    <property type="match status" value="1"/>
</dbReference>
<dbReference type="InterPro" id="IPR020456">
    <property type="entry name" value="Acylphosphatase"/>
</dbReference>
<dbReference type="InterPro" id="IPR001792">
    <property type="entry name" value="Acylphosphatase-like_dom"/>
</dbReference>
<dbReference type="InterPro" id="IPR036046">
    <property type="entry name" value="Acylphosphatase-like_dom_sf"/>
</dbReference>
<dbReference type="InterPro" id="IPR017968">
    <property type="entry name" value="Acylphosphatase_CS"/>
</dbReference>
<dbReference type="NCBIfam" id="NF010997">
    <property type="entry name" value="PRK14422.1"/>
    <property type="match status" value="1"/>
</dbReference>
<dbReference type="PANTHER" id="PTHR47268">
    <property type="entry name" value="ACYLPHOSPHATASE"/>
    <property type="match status" value="1"/>
</dbReference>
<dbReference type="PANTHER" id="PTHR47268:SF4">
    <property type="entry name" value="ACYLPHOSPHATASE"/>
    <property type="match status" value="1"/>
</dbReference>
<dbReference type="Pfam" id="PF00708">
    <property type="entry name" value="Acylphosphatase"/>
    <property type="match status" value="1"/>
</dbReference>
<dbReference type="SUPFAM" id="SSF54975">
    <property type="entry name" value="Acylphosphatase/BLUF domain-like"/>
    <property type="match status" value="1"/>
</dbReference>
<dbReference type="PROSITE" id="PS00150">
    <property type="entry name" value="ACYLPHOSPHATASE_1"/>
    <property type="match status" value="1"/>
</dbReference>
<dbReference type="PROSITE" id="PS51160">
    <property type="entry name" value="ACYLPHOSPHATASE_3"/>
    <property type="match status" value="1"/>
</dbReference>
<sequence length="94" mass="10663">MEKVRLTAFVHGHVQGVGFRWWTTSQARELKLAGSASNLSDGRVCVVAEGPQTQCEELLRRLKENPSSYRRPGHVDTVIEQWGEPRDVEGFVER</sequence>
<proteinExistence type="inferred from homology"/>
<organism>
    <name type="scientific">Corynebacterium glutamicum (strain ATCC 13032 / DSM 20300 / JCM 1318 / BCRC 11384 / CCUG 27702 / LMG 3730 / NBRC 12168 / NCIMB 10025 / NRRL B-2784 / 534)</name>
    <dbReference type="NCBI Taxonomy" id="196627"/>
    <lineage>
        <taxon>Bacteria</taxon>
        <taxon>Bacillati</taxon>
        <taxon>Actinomycetota</taxon>
        <taxon>Actinomycetes</taxon>
        <taxon>Mycobacteriales</taxon>
        <taxon>Corynebacteriaceae</taxon>
        <taxon>Corynebacterium</taxon>
    </lineage>
</organism>
<gene>
    <name type="primary">acyP</name>
    <name type="ordered locus">Cgl2066</name>
    <name type="ordered locus">cg2266</name>
</gene>
<protein>
    <recommendedName>
        <fullName>Acylphosphatase</fullName>
        <ecNumber>3.6.1.7</ecNumber>
    </recommendedName>
    <alternativeName>
        <fullName>Acylphosphate phosphohydrolase</fullName>
    </alternativeName>
</protein>
<feature type="chain" id="PRO_0000326691" description="Acylphosphatase">
    <location>
        <begin position="1"/>
        <end position="94"/>
    </location>
</feature>
<feature type="domain" description="Acylphosphatase-like" evidence="1">
    <location>
        <begin position="5"/>
        <end position="94"/>
    </location>
</feature>
<feature type="active site" evidence="1">
    <location>
        <position position="20"/>
    </location>
</feature>
<feature type="active site" evidence="1">
    <location>
        <position position="38"/>
    </location>
</feature>
<keyword id="KW-0378">Hydrolase</keyword>
<keyword id="KW-1185">Reference proteome</keyword>
<name>ACYP_CORGL</name>
<comment type="catalytic activity">
    <reaction>
        <text>an acyl phosphate + H2O = a carboxylate + phosphate + H(+)</text>
        <dbReference type="Rhea" id="RHEA:14965"/>
        <dbReference type="ChEBI" id="CHEBI:15377"/>
        <dbReference type="ChEBI" id="CHEBI:15378"/>
        <dbReference type="ChEBI" id="CHEBI:29067"/>
        <dbReference type="ChEBI" id="CHEBI:43474"/>
        <dbReference type="ChEBI" id="CHEBI:59918"/>
        <dbReference type="EC" id="3.6.1.7"/>
    </reaction>
</comment>
<comment type="similarity">
    <text evidence="2">Belongs to the acylphosphatase family.</text>
</comment>
<accession>Q8NNW4</accession>
<accession>Q6M3Z7</accession>
<evidence type="ECO:0000255" key="1">
    <source>
        <dbReference type="PROSITE-ProRule" id="PRU00520"/>
    </source>
</evidence>
<evidence type="ECO:0000305" key="2"/>